<feature type="chain" id="PRO_0000236192" description="Sorting nexin-1">
    <location>
        <begin position="1"/>
        <end position="522"/>
    </location>
</feature>
<feature type="domain" description="PX" evidence="5">
    <location>
        <begin position="143"/>
        <end position="272"/>
    </location>
</feature>
<feature type="domain" description="BAR">
    <location>
        <begin position="302"/>
        <end position="522"/>
    </location>
</feature>
<feature type="region of interest" description="Disordered" evidence="6">
    <location>
        <begin position="1"/>
        <end position="89"/>
    </location>
</feature>
<feature type="region of interest" description="Disordered" evidence="6">
    <location>
        <begin position="115"/>
        <end position="142"/>
    </location>
</feature>
<feature type="region of interest" description="Membrane-binding amphipathic helix" evidence="1">
    <location>
        <begin position="281"/>
        <end position="298"/>
    </location>
</feature>
<feature type="compositionally biased region" description="Acidic residues" evidence="6">
    <location>
        <begin position="35"/>
        <end position="45"/>
    </location>
</feature>
<feature type="compositionally biased region" description="Polar residues" evidence="6">
    <location>
        <begin position="60"/>
        <end position="73"/>
    </location>
</feature>
<feature type="compositionally biased region" description="Acidic residues" evidence="6">
    <location>
        <begin position="132"/>
        <end position="142"/>
    </location>
</feature>
<feature type="binding site" evidence="2">
    <location>
        <position position="186"/>
    </location>
    <ligand>
        <name>a 1,2-diacyl-sn-glycero-3-phospho-(1D-myo-inositol-3-phosphate)</name>
        <dbReference type="ChEBI" id="CHEBI:58088"/>
    </ligand>
</feature>
<feature type="binding site" evidence="2">
    <location>
        <position position="188"/>
    </location>
    <ligand>
        <name>a 1,2-diacyl-sn-glycero-3-phospho-(1D-myo-inositol-3-phosphate)</name>
        <dbReference type="ChEBI" id="CHEBI:58088"/>
    </ligand>
</feature>
<feature type="binding site" evidence="2">
    <location>
        <position position="214"/>
    </location>
    <ligand>
        <name>a 1,2-diacyl-sn-glycero-3-phospho-(1D-myo-inositol-3-phosphate)</name>
        <dbReference type="ChEBI" id="CHEBI:58088"/>
    </ligand>
</feature>
<feature type="binding site" evidence="2">
    <location>
        <position position="238"/>
    </location>
    <ligand>
        <name>a 1,2-diacyl-sn-glycero-3-phospho-(1D-myo-inositol-3-phosphate)</name>
        <dbReference type="ChEBI" id="CHEBI:58088"/>
    </ligand>
</feature>
<feature type="modified residue" description="Phosphoserine" evidence="1">
    <location>
        <position position="32"/>
    </location>
</feature>
<feature type="modified residue" description="Phosphoserine" evidence="1">
    <location>
        <position position="39"/>
    </location>
</feature>
<feature type="modified residue" description="Phosphothreonine" evidence="4">
    <location>
        <position position="41"/>
    </location>
</feature>
<feature type="modified residue" description="Phosphothreonine" evidence="1">
    <location>
        <position position="48"/>
    </location>
</feature>
<feature type="modified residue" description="Phosphoserine" evidence="4">
    <location>
        <position position="58"/>
    </location>
</feature>
<feature type="modified residue" description="Phosphoserine" evidence="1">
    <location>
        <position position="72"/>
    </location>
</feature>
<feature type="modified residue" description="Phosphoserine" evidence="1">
    <location>
        <position position="188"/>
    </location>
</feature>
<feature type="modified residue" description="N6-acetyllysine" evidence="1">
    <location>
        <position position="237"/>
    </location>
</feature>
<feature type="modified residue" description="Phosphoserine" evidence="1">
    <location>
        <position position="280"/>
    </location>
</feature>
<gene>
    <name type="primary">SNX1</name>
    <name type="ORF">QnpA-12282</name>
</gene>
<keyword id="KW-0007">Acetylation</keyword>
<keyword id="KW-0966">Cell projection</keyword>
<keyword id="KW-0967">Endosome</keyword>
<keyword id="KW-0333">Golgi apparatus</keyword>
<keyword id="KW-0446">Lipid-binding</keyword>
<keyword id="KW-0472">Membrane</keyword>
<keyword id="KW-0597">Phosphoprotein</keyword>
<keyword id="KW-0653">Protein transport</keyword>
<keyword id="KW-1185">Reference proteome</keyword>
<keyword id="KW-0813">Transport</keyword>
<proteinExistence type="evidence at transcript level"/>
<sequence>MASGGGGCSASERLPPPFPGLEPESEGAAGGSEPEAGDSDTEGEDIFTGAAVVSKHQSPKRTTSLLPINNGSKENGIHEEQDQEPQDLFADATVELSLDNTQNNQKKVPAKTLISLPPQEAPNSSKHQPTYEELEEEEQEDQFDLTVGITDPEKIGDGMNAYVAYKVTTQTSLPLFRSKQFAVKRRFSDFLGLYEKLSEKHSQNGFIVPPPPEKSLIGMTKVKVGKEDSSSAEFLEKRRAALERYLQRIVNHPTMLQDPDVREFLEKEELPRAVGTQTLSGAGLLKMFNKATDAVSKMTIKMNESDIWFEEKLQEVECEEQRLRKLHAVVETLVNHRKELALNTAQFAKSLAMLGSSEDNTALSRALSQLAEVEEKIEQLHQEQANNDFFLLAELLSDYIRLLAIVRAAFDQRMKTWQRWQDAQATLQKKREAEARLLWANKPDKLQQAKDEILEWESRVTQYERDFERISTVVRKEVMRFEKEKSKDFKNHVIKYLETLLYSQQQLAKYWEAFLPEAKAIS</sequence>
<accession>Q4R503</accession>
<comment type="function">
    <text evidence="1">Involved in several stages of intracellular trafficking. Interacts with membranes containing phosphatidylinositol 3-phosphate (PtdIns(3P)) or phosphatidylinositol 3,5-bisphosphate (PtdIns(3,5)P2). Acts in part as component of the retromer membrane-deforming SNX-BAR subcomplex. The SNX-BAR retromer mediates retrograde transport of cargo proteins from endosomes to the trans-Golgi network (TGN) and is involved in endosome-to-plasma membrane transport for cargo protein recycling. The SNX-BAR subcomplex functions to deform the donor membrane into a tubular profile called endosome-to-TGN transport carrier (ETC). Can sense membrane curvature and has in vitro vesicle-to-membrane remodeling activity. Involved in retrograde endosome-to-TGN transport of lysosomal enzyme receptors (IGF2R, M6PR and SORT1). Plays a role in targeting ligand-activated EGFR to the lysosomes for degradation after endocytosis from the cell surface and release from the Golgi. Involvement in retromer-independent endocytic trafficking of P2RY1 and lysosomal degradation of protease-activated receptor-1/F2R. Promotes KALRN- and RHOG-dependent but retromer-independent membrane remodeling such as lamellipodium formation; the function is dependent on GEF activity of KALRN. Required for endocytosis of DRD5 upon agonist stimulation but not for basal receptor trafficking (By similarity).</text>
</comment>
<comment type="subunit">
    <text evidence="1 3">Predominantly forms heterodimers with BAR domain-containing sorting nexins SNX5, SNX6 and SNX32; can self-associate to form homodimers. The heterodimers are proposed to self-assemble into helical arrays on the membrane to stabilize and expand local membrane curvature underlying endosomal tubule formation. Thought to be a component of the originally described retromer complex (also called SNX-BAR retromer) which is a pentamer containing the heterotrimeric retromer cargo-selective complex (CSC), also described as vacuolar protein sorting subcomplex (VPS) and a heterodimeric membrane-deforming subcomplex formed between SNX1 or SNX2 and SNX5 or SNX6 (also called SNX-BAR subcomplex); the respective CSC and SNX-BAR subcomplexes associate with low affinity. Interacts with SNX5, SNX6, SNX32, VPS26A, VPS29, VPS35, DRD5, DENND5A, KALRN, RHOG (GDP-bound form). The interaction with SNX2 is reported controversially. Interacts with DNAJC13; prevented by presence of HGS. Interacts with HGS (By similarity).</text>
</comment>
<comment type="subcellular location">
    <subcellularLocation>
        <location evidence="1">Endosome membrane</location>
        <topology>Peripheral membrane protein</topology>
        <orientation>Cytoplasmic side</orientation>
    </subcellularLocation>
    <subcellularLocation>
        <location evidence="7">Golgi apparatus</location>
        <location evidence="7">trans-Golgi network membrane</location>
        <topology evidence="7">Peripheral membrane protein</topology>
        <orientation evidence="7">Cytoplasmic side</orientation>
    </subcellularLocation>
    <subcellularLocation>
        <location>Early endosome membrane</location>
        <topology>Peripheral membrane protein</topology>
        <orientation>Cytoplasmic side</orientation>
    </subcellularLocation>
    <subcellularLocation>
        <location evidence="1">Cell projection</location>
        <location evidence="1">Lamellipodium</location>
    </subcellularLocation>
    <text evidence="1">Enriched on tubular elements of the early endosome membrane. Binds preferentially to highly curved membranes enriched in phosphatidylinositol 3-phosphate (PtdIns(3P)) or phosphatidylinositol 3,5-bisphosphate (PtdIns(3,5)P2). Colocalized with SORT1 to tubular endosomal membrane structures called endosome-to-TGN transport carriers (ETCs) which are budding from early endosome vacuoles just before maturing into late endosome vacuoles. Colocalized with F-actin at the leading edge of lamellipodia in a KALRN-dependent manner.</text>
</comment>
<comment type="domain">
    <text evidence="1">The BAR domain is able to sense membrane curvature upon dimerization. Membrane remodeling seems to implicate insertion of a N-terminal amphipathic helix (AH) in the membrane (By similarity).</text>
</comment>
<comment type="miscellaneous">
    <text evidence="1">Binds phosphatidylinositol 3-phosphate (PtdIns-(3)P) and phosphatidylinositol 3,5-bisphosphate (PtdIns-(3,5)P2) in liposome-based assays. Can bind PtdIns(3,4,5)P3 in protein:lipid overlay assays, but not in liposome-based assays (By similarity).</text>
</comment>
<comment type="similarity">
    <text evidence="7">Belongs to the sorting nexin family.</text>
</comment>
<organism>
    <name type="scientific">Macaca fascicularis</name>
    <name type="common">Crab-eating macaque</name>
    <name type="synonym">Cynomolgus monkey</name>
    <dbReference type="NCBI Taxonomy" id="9541"/>
    <lineage>
        <taxon>Eukaryota</taxon>
        <taxon>Metazoa</taxon>
        <taxon>Chordata</taxon>
        <taxon>Craniata</taxon>
        <taxon>Vertebrata</taxon>
        <taxon>Euteleostomi</taxon>
        <taxon>Mammalia</taxon>
        <taxon>Eutheria</taxon>
        <taxon>Euarchontoglires</taxon>
        <taxon>Primates</taxon>
        <taxon>Haplorrhini</taxon>
        <taxon>Catarrhini</taxon>
        <taxon>Cercopithecidae</taxon>
        <taxon>Cercopithecinae</taxon>
        <taxon>Macaca</taxon>
    </lineage>
</organism>
<protein>
    <recommendedName>
        <fullName>Sorting nexin-1</fullName>
    </recommendedName>
</protein>
<dbReference type="EMBL" id="AB169741">
    <property type="protein sequence ID" value="BAE01822.1"/>
    <property type="molecule type" value="mRNA"/>
</dbReference>
<dbReference type="RefSeq" id="NP_001274601.1">
    <property type="nucleotide sequence ID" value="NM_001287672.1"/>
</dbReference>
<dbReference type="RefSeq" id="XP_045251526.2">
    <property type="nucleotide sequence ID" value="XM_045395591.2"/>
</dbReference>
<dbReference type="BMRB" id="Q4R503"/>
<dbReference type="SMR" id="Q4R503"/>
<dbReference type="STRING" id="9541.ENSMFAP00000000540"/>
<dbReference type="Ensembl" id="ENSMFAT00000096873.1">
    <property type="protein sequence ID" value="ENSMFAP00000053417.1"/>
    <property type="gene ID" value="ENSMFAG00000040273.2"/>
</dbReference>
<dbReference type="GeneID" id="102136250"/>
<dbReference type="VEuPathDB" id="HostDB:ENSMFAG00000040273"/>
<dbReference type="eggNOG" id="KOG2273">
    <property type="taxonomic scope" value="Eukaryota"/>
</dbReference>
<dbReference type="GeneTree" id="ENSGT00940000155889"/>
<dbReference type="OMA" id="MLVNHRK"/>
<dbReference type="Proteomes" id="UP000233100">
    <property type="component" value="Chromosome 7"/>
</dbReference>
<dbReference type="Bgee" id="ENSMFAG00000040273">
    <property type="expression patterns" value="Expressed in adult mammalian kidney and 13 other cell types or tissues"/>
</dbReference>
<dbReference type="GO" id="GO:0005829">
    <property type="term" value="C:cytosol"/>
    <property type="evidence" value="ECO:0007669"/>
    <property type="project" value="GOC"/>
</dbReference>
<dbReference type="GO" id="GO:0031901">
    <property type="term" value="C:early endosome membrane"/>
    <property type="evidence" value="ECO:0007669"/>
    <property type="project" value="UniProtKB-SubCell"/>
</dbReference>
<dbReference type="GO" id="GO:0010008">
    <property type="term" value="C:endosome membrane"/>
    <property type="evidence" value="ECO:0000250"/>
    <property type="project" value="UniProtKB"/>
</dbReference>
<dbReference type="GO" id="GO:0005794">
    <property type="term" value="C:Golgi apparatus"/>
    <property type="evidence" value="ECO:0007669"/>
    <property type="project" value="UniProtKB-SubCell"/>
</dbReference>
<dbReference type="GO" id="GO:0030027">
    <property type="term" value="C:lamellipodium"/>
    <property type="evidence" value="ECO:0007669"/>
    <property type="project" value="UniProtKB-SubCell"/>
</dbReference>
<dbReference type="GO" id="GO:0035091">
    <property type="term" value="F:phosphatidylinositol binding"/>
    <property type="evidence" value="ECO:0000250"/>
    <property type="project" value="UniProtKB"/>
</dbReference>
<dbReference type="GO" id="GO:0034498">
    <property type="term" value="P:early endosome to Golgi transport"/>
    <property type="evidence" value="ECO:0007669"/>
    <property type="project" value="TreeGrafter"/>
</dbReference>
<dbReference type="GO" id="GO:0006886">
    <property type="term" value="P:intracellular protein transport"/>
    <property type="evidence" value="ECO:0007669"/>
    <property type="project" value="InterPro"/>
</dbReference>
<dbReference type="GO" id="GO:0072673">
    <property type="term" value="P:lamellipodium morphogenesis"/>
    <property type="evidence" value="ECO:0000250"/>
    <property type="project" value="UniProtKB"/>
</dbReference>
<dbReference type="GO" id="GO:0031623">
    <property type="term" value="P:receptor internalization"/>
    <property type="evidence" value="ECO:0000250"/>
    <property type="project" value="UniProtKB"/>
</dbReference>
<dbReference type="GO" id="GO:0042147">
    <property type="term" value="P:retrograde transport, endosome to Golgi"/>
    <property type="evidence" value="ECO:0000250"/>
    <property type="project" value="UniProtKB"/>
</dbReference>
<dbReference type="CDD" id="cd07665">
    <property type="entry name" value="BAR_SNX1"/>
    <property type="match status" value="1"/>
</dbReference>
<dbReference type="CDD" id="cd07281">
    <property type="entry name" value="PX_SNX1"/>
    <property type="match status" value="1"/>
</dbReference>
<dbReference type="FunFam" id="3.30.1520.10:FF:000015">
    <property type="entry name" value="Sorting nexin 1"/>
    <property type="match status" value="1"/>
</dbReference>
<dbReference type="FunFam" id="1.20.1270.60:FF:000012">
    <property type="entry name" value="Sorting nexin 2"/>
    <property type="match status" value="1"/>
</dbReference>
<dbReference type="Gene3D" id="1.20.1270.60">
    <property type="entry name" value="Arfaptin homology (AH) domain/BAR domain"/>
    <property type="match status" value="1"/>
</dbReference>
<dbReference type="Gene3D" id="3.30.1520.10">
    <property type="entry name" value="Phox-like domain"/>
    <property type="match status" value="1"/>
</dbReference>
<dbReference type="InterPro" id="IPR027267">
    <property type="entry name" value="AH/BAR_dom_sf"/>
</dbReference>
<dbReference type="InterPro" id="IPR001683">
    <property type="entry name" value="PX_dom"/>
</dbReference>
<dbReference type="InterPro" id="IPR036871">
    <property type="entry name" value="PX_dom_sf"/>
</dbReference>
<dbReference type="InterPro" id="IPR034901">
    <property type="entry name" value="PX_SNX1"/>
</dbReference>
<dbReference type="InterPro" id="IPR028660">
    <property type="entry name" value="SNX1_BAR"/>
</dbReference>
<dbReference type="InterPro" id="IPR005329">
    <property type="entry name" value="Sorting_nexin_N"/>
</dbReference>
<dbReference type="InterPro" id="IPR015404">
    <property type="entry name" value="Vps5_C"/>
</dbReference>
<dbReference type="PANTHER" id="PTHR10555">
    <property type="entry name" value="SORTING NEXIN"/>
    <property type="match status" value="1"/>
</dbReference>
<dbReference type="PANTHER" id="PTHR10555:SF129">
    <property type="entry name" value="SORTING NEXIN-1"/>
    <property type="match status" value="1"/>
</dbReference>
<dbReference type="Pfam" id="PF00787">
    <property type="entry name" value="PX"/>
    <property type="match status" value="1"/>
</dbReference>
<dbReference type="Pfam" id="PF03700">
    <property type="entry name" value="Sorting_nexin"/>
    <property type="match status" value="1"/>
</dbReference>
<dbReference type="Pfam" id="PF09325">
    <property type="entry name" value="Vps5"/>
    <property type="match status" value="1"/>
</dbReference>
<dbReference type="SMART" id="SM00312">
    <property type="entry name" value="PX"/>
    <property type="match status" value="1"/>
</dbReference>
<dbReference type="SUPFAM" id="SSF103657">
    <property type="entry name" value="BAR/IMD domain-like"/>
    <property type="match status" value="1"/>
</dbReference>
<dbReference type="SUPFAM" id="SSF64268">
    <property type="entry name" value="PX domain"/>
    <property type="match status" value="1"/>
</dbReference>
<dbReference type="PROSITE" id="PS50195">
    <property type="entry name" value="PX"/>
    <property type="match status" value="1"/>
</dbReference>
<name>SNX1_MACFA</name>
<reference key="1">
    <citation type="submission" date="2005-06" db="EMBL/GenBank/DDBJ databases">
        <title>DNA sequences of macaque genes expressed in brain or testis and its evolutionary implications.</title>
        <authorList>
            <consortium name="International consortium for macaque cDNA sequencing and analysis"/>
        </authorList>
    </citation>
    <scope>NUCLEOTIDE SEQUENCE [LARGE SCALE MRNA]</scope>
    <source>
        <tissue>Parietal cortex</tissue>
    </source>
</reference>
<evidence type="ECO:0000250" key="1">
    <source>
        <dbReference type="UniProtKB" id="Q13596"/>
    </source>
</evidence>
<evidence type="ECO:0000250" key="2">
    <source>
        <dbReference type="UniProtKB" id="Q96L94"/>
    </source>
</evidence>
<evidence type="ECO:0000250" key="3">
    <source>
        <dbReference type="UniProtKB" id="Q99N27"/>
    </source>
</evidence>
<evidence type="ECO:0000250" key="4">
    <source>
        <dbReference type="UniProtKB" id="Q9WV80"/>
    </source>
</evidence>
<evidence type="ECO:0000255" key="5">
    <source>
        <dbReference type="PROSITE-ProRule" id="PRU00147"/>
    </source>
</evidence>
<evidence type="ECO:0000256" key="6">
    <source>
        <dbReference type="SAM" id="MobiDB-lite"/>
    </source>
</evidence>
<evidence type="ECO:0000305" key="7"/>